<evidence type="ECO:0000255" key="1">
    <source>
        <dbReference type="HAMAP-Rule" id="MF_00756"/>
    </source>
</evidence>
<organism>
    <name type="scientific">Methanosarcina mazei (strain ATCC BAA-159 / DSM 3647 / Goe1 / Go1 / JCM 11833 / OCM 88)</name>
    <name type="common">Methanosarcina frisia</name>
    <dbReference type="NCBI Taxonomy" id="192952"/>
    <lineage>
        <taxon>Archaea</taxon>
        <taxon>Methanobacteriati</taxon>
        <taxon>Methanobacteriota</taxon>
        <taxon>Stenosarchaea group</taxon>
        <taxon>Methanomicrobia</taxon>
        <taxon>Methanosarcinales</taxon>
        <taxon>Methanosarcinaceae</taxon>
        <taxon>Methanosarcina</taxon>
    </lineage>
</organism>
<dbReference type="EC" id="3.1.26.5" evidence="1"/>
<dbReference type="EMBL" id="AE008384">
    <property type="protein sequence ID" value="AAM32314.1"/>
    <property type="molecule type" value="Genomic_DNA"/>
</dbReference>
<dbReference type="RefSeq" id="WP_011034531.1">
    <property type="nucleotide sequence ID" value="NC_003901.1"/>
</dbReference>
<dbReference type="SMR" id="Q8PTU3"/>
<dbReference type="KEGG" id="mma:MM_2618"/>
<dbReference type="PATRIC" id="fig|192952.21.peg.3011"/>
<dbReference type="eggNOG" id="arCOG00307">
    <property type="taxonomic scope" value="Archaea"/>
</dbReference>
<dbReference type="HOGENOM" id="CLU_074509_1_0_2"/>
<dbReference type="Proteomes" id="UP000000595">
    <property type="component" value="Chromosome"/>
</dbReference>
<dbReference type="GO" id="GO:0005737">
    <property type="term" value="C:cytoplasm"/>
    <property type="evidence" value="ECO:0007669"/>
    <property type="project" value="UniProtKB-SubCell"/>
</dbReference>
<dbReference type="GO" id="GO:0030677">
    <property type="term" value="C:ribonuclease P complex"/>
    <property type="evidence" value="ECO:0007669"/>
    <property type="project" value="UniProtKB-UniRule"/>
</dbReference>
<dbReference type="GO" id="GO:0004526">
    <property type="term" value="F:ribonuclease P activity"/>
    <property type="evidence" value="ECO:0007669"/>
    <property type="project" value="UniProtKB-UniRule"/>
</dbReference>
<dbReference type="GO" id="GO:0003723">
    <property type="term" value="F:RNA binding"/>
    <property type="evidence" value="ECO:0007669"/>
    <property type="project" value="TreeGrafter"/>
</dbReference>
<dbReference type="GO" id="GO:0001682">
    <property type="term" value="P:tRNA 5'-leader removal"/>
    <property type="evidence" value="ECO:0007669"/>
    <property type="project" value="UniProtKB-UniRule"/>
</dbReference>
<dbReference type="Gene3D" id="3.20.20.140">
    <property type="entry name" value="Metal-dependent hydrolases"/>
    <property type="match status" value="1"/>
</dbReference>
<dbReference type="HAMAP" id="MF_00756">
    <property type="entry name" value="RNase_P_3"/>
    <property type="match status" value="1"/>
</dbReference>
<dbReference type="InterPro" id="IPR016195">
    <property type="entry name" value="Pol/histidinol_Pase-like"/>
</dbReference>
<dbReference type="InterPro" id="IPR023539">
    <property type="entry name" value="RNase_P_comp-3_arc"/>
</dbReference>
<dbReference type="InterPro" id="IPR002738">
    <property type="entry name" value="RNase_P_p30"/>
</dbReference>
<dbReference type="NCBIfam" id="NF046111">
    <property type="entry name" value="RNaseP3Mthb"/>
    <property type="match status" value="1"/>
</dbReference>
<dbReference type="PANTHER" id="PTHR13031:SF0">
    <property type="entry name" value="RIBONUCLEASE P PROTEIN SUBUNIT P30"/>
    <property type="match status" value="1"/>
</dbReference>
<dbReference type="PANTHER" id="PTHR13031">
    <property type="entry name" value="RIBONUCLEASE P SUBUNIT P30"/>
    <property type="match status" value="1"/>
</dbReference>
<dbReference type="Pfam" id="PF01876">
    <property type="entry name" value="RNase_P_p30"/>
    <property type="match status" value="1"/>
</dbReference>
<dbReference type="SUPFAM" id="SSF89550">
    <property type="entry name" value="PHP domain-like"/>
    <property type="match status" value="1"/>
</dbReference>
<reference key="1">
    <citation type="journal article" date="2002" name="J. Mol. Microbiol. Biotechnol.">
        <title>The genome of Methanosarcina mazei: evidence for lateral gene transfer between Bacteria and Archaea.</title>
        <authorList>
            <person name="Deppenmeier U."/>
            <person name="Johann A."/>
            <person name="Hartsch T."/>
            <person name="Merkl R."/>
            <person name="Schmitz R.A."/>
            <person name="Martinez-Arias R."/>
            <person name="Henne A."/>
            <person name="Wiezer A."/>
            <person name="Baeumer S."/>
            <person name="Jacobi C."/>
            <person name="Brueggemann H."/>
            <person name="Lienard T."/>
            <person name="Christmann A."/>
            <person name="Boemecke M."/>
            <person name="Steckel S."/>
            <person name="Bhattacharyya A."/>
            <person name="Lykidis A."/>
            <person name="Overbeek R."/>
            <person name="Klenk H.-P."/>
            <person name="Gunsalus R.P."/>
            <person name="Fritz H.-J."/>
            <person name="Gottschalk G."/>
        </authorList>
    </citation>
    <scope>NUCLEOTIDE SEQUENCE [LARGE SCALE GENOMIC DNA]</scope>
    <source>
        <strain>ATCC BAA-159 / DSM 3647 / Goe1 / Go1 / JCM 11833 / OCM 88</strain>
    </source>
</reference>
<name>RNP3_METMA</name>
<feature type="chain" id="PRO_0000140041" description="Ribonuclease P protein component 3">
    <location>
        <begin position="1"/>
        <end position="239"/>
    </location>
</feature>
<proteinExistence type="inferred from homology"/>
<accession>Q8PTU3</accession>
<sequence>MGKPEFYDFCVHAVPDGANAVEELSSLSRHLGYSGIALANHSDKLPSKKPVLPSIEGFEVFRGIELVEENPSKLHGLVGKFRSSMDVLIVHGGSEAVNRAALENPRVDILNHPAFDKSSGLNQVLAKAAAENGVAIGITLRPLLHSRGSRRIRMLSDLKANLELARKYDVPLVLCSDAMSCYDLRSPMETLAFAEVCGLEEDEALDALSTVPKKIIKKNRPGPGYVREGIEVLEGEDIF</sequence>
<comment type="function">
    <text evidence="1">Part of ribonuclease P, a protein complex that generates mature tRNA molecules by cleaving their 5'-ends.</text>
</comment>
<comment type="catalytic activity">
    <reaction evidence="1">
        <text>Endonucleolytic cleavage of RNA, removing 5'-extranucleotides from tRNA precursor.</text>
        <dbReference type="EC" id="3.1.26.5"/>
    </reaction>
</comment>
<comment type="subunit">
    <text evidence="1">Consists of a catalytic RNA component and at least 4-5 protein subunits.</text>
</comment>
<comment type="subcellular location">
    <subcellularLocation>
        <location evidence="1">Cytoplasm</location>
    </subcellularLocation>
</comment>
<comment type="similarity">
    <text evidence="1">Belongs to the eukaryotic/archaeal RNase P protein component 3 family.</text>
</comment>
<gene>
    <name evidence="1" type="primary">rnp3</name>
    <name type="ordered locus">MM_2618</name>
</gene>
<protein>
    <recommendedName>
        <fullName evidence="1">Ribonuclease P protein component 3</fullName>
        <shortName evidence="1">RNase P component 3</shortName>
        <ecNumber evidence="1">3.1.26.5</ecNumber>
    </recommendedName>
    <alternativeName>
        <fullName evidence="1">Rpp30</fullName>
    </alternativeName>
</protein>
<keyword id="KW-0963">Cytoplasm</keyword>
<keyword id="KW-0255">Endonuclease</keyword>
<keyword id="KW-0378">Hydrolase</keyword>
<keyword id="KW-0540">Nuclease</keyword>
<keyword id="KW-0819">tRNA processing</keyword>